<evidence type="ECO:0000255" key="1">
    <source>
        <dbReference type="HAMAP-Rule" id="MF_00006"/>
    </source>
</evidence>
<dbReference type="EC" id="4.3.2.1" evidence="1"/>
<dbReference type="EMBL" id="AE002098">
    <property type="protein sequence ID" value="AAF41060.1"/>
    <property type="molecule type" value="Genomic_DNA"/>
</dbReference>
<dbReference type="PIR" id="B81175">
    <property type="entry name" value="B81175"/>
</dbReference>
<dbReference type="RefSeq" id="NP_273680.1">
    <property type="nucleotide sequence ID" value="NC_003112.2"/>
</dbReference>
<dbReference type="RefSeq" id="WP_002225520.1">
    <property type="nucleotide sequence ID" value="NC_003112.2"/>
</dbReference>
<dbReference type="SMR" id="Q9K0G8"/>
<dbReference type="FunCoup" id="Q9K0G8">
    <property type="interactions" value="457"/>
</dbReference>
<dbReference type="STRING" id="122586.NMB0637"/>
<dbReference type="PaxDb" id="122586-NMB0637"/>
<dbReference type="KEGG" id="nme:NMB0637"/>
<dbReference type="PATRIC" id="fig|122586.8.peg.806"/>
<dbReference type="HOGENOM" id="CLU_027272_2_3_4"/>
<dbReference type="InParanoid" id="Q9K0G8"/>
<dbReference type="OrthoDB" id="9769623at2"/>
<dbReference type="UniPathway" id="UPA00068">
    <property type="reaction ID" value="UER00114"/>
</dbReference>
<dbReference type="Proteomes" id="UP000000425">
    <property type="component" value="Chromosome"/>
</dbReference>
<dbReference type="GO" id="GO:0005829">
    <property type="term" value="C:cytosol"/>
    <property type="evidence" value="ECO:0000318"/>
    <property type="project" value="GO_Central"/>
</dbReference>
<dbReference type="GO" id="GO:0004056">
    <property type="term" value="F:argininosuccinate lyase activity"/>
    <property type="evidence" value="ECO:0000318"/>
    <property type="project" value="GO_Central"/>
</dbReference>
<dbReference type="GO" id="GO:0042450">
    <property type="term" value="P:arginine biosynthetic process via ornithine"/>
    <property type="evidence" value="ECO:0000318"/>
    <property type="project" value="GO_Central"/>
</dbReference>
<dbReference type="GO" id="GO:0006526">
    <property type="term" value="P:L-arginine biosynthetic process"/>
    <property type="evidence" value="ECO:0007669"/>
    <property type="project" value="UniProtKB-UniRule"/>
</dbReference>
<dbReference type="CDD" id="cd01359">
    <property type="entry name" value="Argininosuccinate_lyase"/>
    <property type="match status" value="1"/>
</dbReference>
<dbReference type="FunFam" id="1.10.275.10:FF:000002">
    <property type="entry name" value="Argininosuccinate lyase"/>
    <property type="match status" value="1"/>
</dbReference>
<dbReference type="FunFam" id="1.10.40.30:FF:000001">
    <property type="entry name" value="Argininosuccinate lyase"/>
    <property type="match status" value="1"/>
</dbReference>
<dbReference type="FunFam" id="1.20.200.10:FF:000015">
    <property type="entry name" value="argininosuccinate lyase isoform X2"/>
    <property type="match status" value="1"/>
</dbReference>
<dbReference type="Gene3D" id="1.10.40.30">
    <property type="entry name" value="Fumarase/aspartase (C-terminal domain)"/>
    <property type="match status" value="1"/>
</dbReference>
<dbReference type="Gene3D" id="1.20.200.10">
    <property type="entry name" value="Fumarase/aspartase (Central domain)"/>
    <property type="match status" value="1"/>
</dbReference>
<dbReference type="Gene3D" id="1.10.275.10">
    <property type="entry name" value="Fumarase/aspartase (N-terminal domain)"/>
    <property type="match status" value="1"/>
</dbReference>
<dbReference type="HAMAP" id="MF_00006">
    <property type="entry name" value="Arg_succ_lyase"/>
    <property type="match status" value="1"/>
</dbReference>
<dbReference type="InterPro" id="IPR029419">
    <property type="entry name" value="Arg_succ_lyase_C"/>
</dbReference>
<dbReference type="InterPro" id="IPR009049">
    <property type="entry name" value="Argininosuccinate_lyase"/>
</dbReference>
<dbReference type="InterPro" id="IPR024083">
    <property type="entry name" value="Fumarase/histidase_N"/>
</dbReference>
<dbReference type="InterPro" id="IPR020557">
    <property type="entry name" value="Fumarate_lyase_CS"/>
</dbReference>
<dbReference type="InterPro" id="IPR000362">
    <property type="entry name" value="Fumarate_lyase_fam"/>
</dbReference>
<dbReference type="InterPro" id="IPR022761">
    <property type="entry name" value="Fumarate_lyase_N"/>
</dbReference>
<dbReference type="InterPro" id="IPR008948">
    <property type="entry name" value="L-Aspartase-like"/>
</dbReference>
<dbReference type="NCBIfam" id="TIGR00838">
    <property type="entry name" value="argH"/>
    <property type="match status" value="1"/>
</dbReference>
<dbReference type="PANTHER" id="PTHR43814">
    <property type="entry name" value="ARGININOSUCCINATE LYASE"/>
    <property type="match status" value="1"/>
</dbReference>
<dbReference type="PANTHER" id="PTHR43814:SF1">
    <property type="entry name" value="ARGININOSUCCINATE LYASE"/>
    <property type="match status" value="1"/>
</dbReference>
<dbReference type="Pfam" id="PF14698">
    <property type="entry name" value="ASL_C2"/>
    <property type="match status" value="1"/>
</dbReference>
<dbReference type="Pfam" id="PF00206">
    <property type="entry name" value="Lyase_1"/>
    <property type="match status" value="1"/>
</dbReference>
<dbReference type="PRINTS" id="PR00145">
    <property type="entry name" value="ARGSUCLYASE"/>
</dbReference>
<dbReference type="PRINTS" id="PR00149">
    <property type="entry name" value="FUMRATELYASE"/>
</dbReference>
<dbReference type="SUPFAM" id="SSF48557">
    <property type="entry name" value="L-aspartase-like"/>
    <property type="match status" value="1"/>
</dbReference>
<dbReference type="PROSITE" id="PS00163">
    <property type="entry name" value="FUMARATE_LYASES"/>
    <property type="match status" value="1"/>
</dbReference>
<gene>
    <name evidence="1" type="primary">argH</name>
    <name type="ordered locus">NMB0637</name>
</gene>
<keyword id="KW-0028">Amino-acid biosynthesis</keyword>
<keyword id="KW-0055">Arginine biosynthesis</keyword>
<keyword id="KW-0963">Cytoplasm</keyword>
<keyword id="KW-0456">Lyase</keyword>
<keyword id="KW-1185">Reference proteome</keyword>
<name>ARLY_NEIMB</name>
<feature type="chain" id="PRO_0000137795" description="Argininosuccinate lyase">
    <location>
        <begin position="1"/>
        <end position="458"/>
    </location>
</feature>
<protein>
    <recommendedName>
        <fullName evidence="1">Argininosuccinate lyase</fullName>
        <shortName evidence="1">ASAL</shortName>
        <ecNumber evidence="1">4.3.2.1</ecNumber>
    </recommendedName>
    <alternativeName>
        <fullName evidence="1">Arginosuccinase</fullName>
    </alternativeName>
</protein>
<proteinExistence type="inferred from homology"/>
<organism>
    <name type="scientific">Neisseria meningitidis serogroup B (strain ATCC BAA-335 / MC58)</name>
    <dbReference type="NCBI Taxonomy" id="122586"/>
    <lineage>
        <taxon>Bacteria</taxon>
        <taxon>Pseudomonadati</taxon>
        <taxon>Pseudomonadota</taxon>
        <taxon>Betaproteobacteria</taxon>
        <taxon>Neisseriales</taxon>
        <taxon>Neisseriaceae</taxon>
        <taxon>Neisseria</taxon>
    </lineage>
</organism>
<sequence length="458" mass="51244">MHDKTWSGRFNEPVSELVKQYTASIGFDRRLAEWDIQGSLAHAQMLKETGVLDEGDLADIRRGMAEILEEIRSGKIEWSSDLEDVHMNIERRLTDKIGDAGKRLHTGRSRNDQVATDIRLWLRDQITVIQSLIQSLQTALLDLAEQNAETVMPGFTHLQVAQPVSFGHHMLAYVEMLGRDNERMADCRCRVNRMPLGAAALAGTTYPIQREITAELLGFEQICQNSLDAVSDRDFAIEFTAAASLVMVHLSRLSEELILWMSPRFGFIDIADRFCTGSSIMPQKKNPDVPELVRGKSGRVIGHLIGLITLMKSQPLAYNKDNQEDKEPLFDTADTLIDTLRIYADMMRGVTVKPDNMRAAVMQGFATATDLADYLVKKGMPFRDAHEVVAQAVRHADQAGVDLSELPLEVLQGFSDLIADDVYGVLTPEGSLNARNHLGGTAPEQVRFQVKRWREMLA</sequence>
<accession>Q9K0G8</accession>
<comment type="catalytic activity">
    <reaction evidence="1">
        <text>2-(N(omega)-L-arginino)succinate = fumarate + L-arginine</text>
        <dbReference type="Rhea" id="RHEA:24020"/>
        <dbReference type="ChEBI" id="CHEBI:29806"/>
        <dbReference type="ChEBI" id="CHEBI:32682"/>
        <dbReference type="ChEBI" id="CHEBI:57472"/>
        <dbReference type="EC" id="4.3.2.1"/>
    </reaction>
</comment>
<comment type="pathway">
    <text evidence="1">Amino-acid biosynthesis; L-arginine biosynthesis; L-arginine from L-ornithine and carbamoyl phosphate: step 3/3.</text>
</comment>
<comment type="subcellular location">
    <subcellularLocation>
        <location evidence="1">Cytoplasm</location>
    </subcellularLocation>
</comment>
<comment type="similarity">
    <text evidence="1">Belongs to the lyase 1 family. Argininosuccinate lyase subfamily.</text>
</comment>
<reference key="1">
    <citation type="journal article" date="2000" name="Science">
        <title>Complete genome sequence of Neisseria meningitidis serogroup B strain MC58.</title>
        <authorList>
            <person name="Tettelin H."/>
            <person name="Saunders N.J."/>
            <person name="Heidelberg J.F."/>
            <person name="Jeffries A.C."/>
            <person name="Nelson K.E."/>
            <person name="Eisen J.A."/>
            <person name="Ketchum K.A."/>
            <person name="Hood D.W."/>
            <person name="Peden J.F."/>
            <person name="Dodson R.J."/>
            <person name="Nelson W.C."/>
            <person name="Gwinn M.L."/>
            <person name="DeBoy R.T."/>
            <person name="Peterson J.D."/>
            <person name="Hickey E.K."/>
            <person name="Haft D.H."/>
            <person name="Salzberg S.L."/>
            <person name="White O."/>
            <person name="Fleischmann R.D."/>
            <person name="Dougherty B.A."/>
            <person name="Mason T.M."/>
            <person name="Ciecko A."/>
            <person name="Parksey D.S."/>
            <person name="Blair E."/>
            <person name="Cittone H."/>
            <person name="Clark E.B."/>
            <person name="Cotton M.D."/>
            <person name="Utterback T.R."/>
            <person name="Khouri H.M."/>
            <person name="Qin H."/>
            <person name="Vamathevan J.J."/>
            <person name="Gill J."/>
            <person name="Scarlato V."/>
            <person name="Masignani V."/>
            <person name="Pizza M."/>
            <person name="Grandi G."/>
            <person name="Sun L."/>
            <person name="Smith H.O."/>
            <person name="Fraser C.M."/>
            <person name="Moxon E.R."/>
            <person name="Rappuoli R."/>
            <person name="Venter J.C."/>
        </authorList>
    </citation>
    <scope>NUCLEOTIDE SEQUENCE [LARGE SCALE GENOMIC DNA]</scope>
    <source>
        <strain>ATCC BAA-335 / MC58</strain>
    </source>
</reference>